<feature type="chain" id="PRO_0000179683" description="ATP-dependent Clp protease proteolytic subunit 1">
    <location>
        <begin position="1"/>
        <end position="197"/>
    </location>
</feature>
<feature type="active site" description="Nucleophile" evidence="1">
    <location>
        <position position="96"/>
    </location>
</feature>
<feature type="active site" evidence="1">
    <location>
        <position position="121"/>
    </location>
</feature>
<reference key="1">
    <citation type="journal article" date="2007" name="Photosyn. Res.">
        <title>Complete nucleotide sequence of the freshwater unicellular cyanobacterium Synechococcus elongatus PCC 6301 chromosome: gene content and organization.</title>
        <authorList>
            <person name="Sugita C."/>
            <person name="Ogata K."/>
            <person name="Shikata M."/>
            <person name="Jikuya H."/>
            <person name="Takano J."/>
            <person name="Furumichi M."/>
            <person name="Kanehisa M."/>
            <person name="Omata T."/>
            <person name="Sugiura M."/>
            <person name="Sugita M."/>
        </authorList>
    </citation>
    <scope>NUCLEOTIDE SEQUENCE [LARGE SCALE GENOMIC DNA]</scope>
    <source>
        <strain>ATCC 27144 / PCC 6301 / SAUG 1402/1</strain>
    </source>
</reference>
<protein>
    <recommendedName>
        <fullName evidence="1">ATP-dependent Clp protease proteolytic subunit 1</fullName>
        <ecNumber evidence="1">3.4.21.92</ecNumber>
    </recommendedName>
    <alternativeName>
        <fullName evidence="1">Endopeptidase Clp 1</fullName>
    </alternativeName>
</protein>
<sequence length="197" mass="21696">MIPIVVEESGRGERAFDIYSRLLRERIIFLGEPVTSDVANRIVAQLLFLEAEDPEKDIYLYINSPGGSVYDGLGIFDTMNHIRPDVSTVCVGLAASMGAFLLAAGAKGKRTSLAHSRIMIHQPLGGAQGQAKDIEIQANEILYIKQNLNEVLAERTGQPLSRIEDDTDRDFFMSASEAVEYGLIDRVIDRRALKATA</sequence>
<keyword id="KW-0963">Cytoplasm</keyword>
<keyword id="KW-0378">Hydrolase</keyword>
<keyword id="KW-0645">Protease</keyword>
<keyword id="KW-0720">Serine protease</keyword>
<proteinExistence type="inferred from homology"/>
<accession>Q5N665</accession>
<name>CLPP1_SYNP6</name>
<dbReference type="EC" id="3.4.21.92" evidence="1"/>
<dbReference type="EMBL" id="AP008231">
    <property type="protein sequence ID" value="BAD78202.1"/>
    <property type="molecule type" value="Genomic_DNA"/>
</dbReference>
<dbReference type="RefSeq" id="WP_011242325.1">
    <property type="nucleotide sequence ID" value="NC_006576.1"/>
</dbReference>
<dbReference type="SMR" id="Q5N665"/>
<dbReference type="MEROPS" id="S14.001"/>
<dbReference type="KEGG" id="syc:syc0012_c"/>
<dbReference type="eggNOG" id="COG0740">
    <property type="taxonomic scope" value="Bacteria"/>
</dbReference>
<dbReference type="Proteomes" id="UP000001175">
    <property type="component" value="Chromosome"/>
</dbReference>
<dbReference type="GO" id="GO:0005737">
    <property type="term" value="C:cytoplasm"/>
    <property type="evidence" value="ECO:0007669"/>
    <property type="project" value="UniProtKB-SubCell"/>
</dbReference>
<dbReference type="GO" id="GO:0009368">
    <property type="term" value="C:endopeptidase Clp complex"/>
    <property type="evidence" value="ECO:0007669"/>
    <property type="project" value="TreeGrafter"/>
</dbReference>
<dbReference type="GO" id="GO:0004176">
    <property type="term" value="F:ATP-dependent peptidase activity"/>
    <property type="evidence" value="ECO:0007669"/>
    <property type="project" value="InterPro"/>
</dbReference>
<dbReference type="GO" id="GO:0051117">
    <property type="term" value="F:ATPase binding"/>
    <property type="evidence" value="ECO:0007669"/>
    <property type="project" value="TreeGrafter"/>
</dbReference>
<dbReference type="GO" id="GO:0004252">
    <property type="term" value="F:serine-type endopeptidase activity"/>
    <property type="evidence" value="ECO:0007669"/>
    <property type="project" value="UniProtKB-UniRule"/>
</dbReference>
<dbReference type="GO" id="GO:0006515">
    <property type="term" value="P:protein quality control for misfolded or incompletely synthesized proteins"/>
    <property type="evidence" value="ECO:0007669"/>
    <property type="project" value="TreeGrafter"/>
</dbReference>
<dbReference type="CDD" id="cd07017">
    <property type="entry name" value="S14_ClpP_2"/>
    <property type="match status" value="1"/>
</dbReference>
<dbReference type="FunFam" id="3.90.226.10:FF:000001">
    <property type="entry name" value="ATP-dependent Clp protease proteolytic subunit"/>
    <property type="match status" value="1"/>
</dbReference>
<dbReference type="Gene3D" id="3.90.226.10">
    <property type="entry name" value="2-enoyl-CoA Hydratase, Chain A, domain 1"/>
    <property type="match status" value="1"/>
</dbReference>
<dbReference type="HAMAP" id="MF_00444">
    <property type="entry name" value="ClpP"/>
    <property type="match status" value="1"/>
</dbReference>
<dbReference type="InterPro" id="IPR001907">
    <property type="entry name" value="ClpP"/>
</dbReference>
<dbReference type="InterPro" id="IPR029045">
    <property type="entry name" value="ClpP/crotonase-like_dom_sf"/>
</dbReference>
<dbReference type="InterPro" id="IPR023562">
    <property type="entry name" value="ClpP/TepA"/>
</dbReference>
<dbReference type="InterPro" id="IPR033135">
    <property type="entry name" value="ClpP_His_AS"/>
</dbReference>
<dbReference type="InterPro" id="IPR018215">
    <property type="entry name" value="ClpP_Ser_AS"/>
</dbReference>
<dbReference type="NCBIfam" id="TIGR00493">
    <property type="entry name" value="clpP"/>
    <property type="match status" value="1"/>
</dbReference>
<dbReference type="NCBIfam" id="NF001368">
    <property type="entry name" value="PRK00277.1"/>
    <property type="match status" value="1"/>
</dbReference>
<dbReference type="NCBIfam" id="NF009203">
    <property type="entry name" value="PRK12551.1"/>
    <property type="match status" value="1"/>
</dbReference>
<dbReference type="NCBIfam" id="NF009205">
    <property type="entry name" value="PRK12553.1"/>
    <property type="match status" value="1"/>
</dbReference>
<dbReference type="PANTHER" id="PTHR10381">
    <property type="entry name" value="ATP-DEPENDENT CLP PROTEASE PROTEOLYTIC SUBUNIT"/>
    <property type="match status" value="1"/>
</dbReference>
<dbReference type="PANTHER" id="PTHR10381:SF70">
    <property type="entry name" value="ATP-DEPENDENT CLP PROTEASE PROTEOLYTIC SUBUNIT"/>
    <property type="match status" value="1"/>
</dbReference>
<dbReference type="Pfam" id="PF00574">
    <property type="entry name" value="CLP_protease"/>
    <property type="match status" value="1"/>
</dbReference>
<dbReference type="PRINTS" id="PR00127">
    <property type="entry name" value="CLPPROTEASEP"/>
</dbReference>
<dbReference type="SUPFAM" id="SSF52096">
    <property type="entry name" value="ClpP/crotonase"/>
    <property type="match status" value="1"/>
</dbReference>
<dbReference type="PROSITE" id="PS00382">
    <property type="entry name" value="CLP_PROTEASE_HIS"/>
    <property type="match status" value="1"/>
</dbReference>
<dbReference type="PROSITE" id="PS00381">
    <property type="entry name" value="CLP_PROTEASE_SER"/>
    <property type="match status" value="1"/>
</dbReference>
<gene>
    <name evidence="1" type="primary">clpP1</name>
    <name type="ordered locus">syc0012_c</name>
</gene>
<comment type="function">
    <text evidence="1">Cleaves peptides in various proteins in a process that requires ATP hydrolysis. Has a chymotrypsin-like activity. Plays a major role in the degradation of misfolded proteins.</text>
</comment>
<comment type="catalytic activity">
    <reaction evidence="1">
        <text>Hydrolysis of proteins to small peptides in the presence of ATP and magnesium. alpha-casein is the usual test substrate. In the absence of ATP, only oligopeptides shorter than five residues are hydrolyzed (such as succinyl-Leu-Tyr-|-NHMec, and Leu-Tyr-Leu-|-Tyr-Trp, in which cleavage of the -Tyr-|-Leu- and -Tyr-|-Trp bonds also occurs).</text>
        <dbReference type="EC" id="3.4.21.92"/>
    </reaction>
</comment>
<comment type="subunit">
    <text evidence="1">Fourteen ClpP subunits assemble into 2 heptameric rings which stack back to back to give a disk-like structure with a central cavity, resembling the structure of eukaryotic proteasomes.</text>
</comment>
<comment type="subcellular location">
    <subcellularLocation>
        <location evidence="1">Cytoplasm</location>
    </subcellularLocation>
</comment>
<comment type="similarity">
    <text evidence="1">Belongs to the peptidase S14 family.</text>
</comment>
<evidence type="ECO:0000255" key="1">
    <source>
        <dbReference type="HAMAP-Rule" id="MF_00444"/>
    </source>
</evidence>
<organism>
    <name type="scientific">Synechococcus sp. (strain ATCC 27144 / PCC 6301 / SAUG 1402/1)</name>
    <name type="common">Anacystis nidulans</name>
    <dbReference type="NCBI Taxonomy" id="269084"/>
    <lineage>
        <taxon>Bacteria</taxon>
        <taxon>Bacillati</taxon>
        <taxon>Cyanobacteriota</taxon>
        <taxon>Cyanophyceae</taxon>
        <taxon>Synechococcales</taxon>
        <taxon>Synechococcaceae</taxon>
        <taxon>Synechococcus</taxon>
    </lineage>
</organism>